<evidence type="ECO:0000255" key="1">
    <source>
        <dbReference type="HAMAP-Rule" id="MF_00102"/>
    </source>
</evidence>
<evidence type="ECO:0000305" key="2"/>
<organism>
    <name type="scientific">Vibrio cholerae serotype O1 (strain M66-2)</name>
    <dbReference type="NCBI Taxonomy" id="579112"/>
    <lineage>
        <taxon>Bacteria</taxon>
        <taxon>Pseudomonadati</taxon>
        <taxon>Pseudomonadota</taxon>
        <taxon>Gammaproteobacteria</taxon>
        <taxon>Vibrionales</taxon>
        <taxon>Vibrionaceae</taxon>
        <taxon>Vibrio</taxon>
    </lineage>
</organism>
<keyword id="KW-0028">Amino-acid biosynthesis</keyword>
<keyword id="KW-0963">Cytoplasm</keyword>
<keyword id="KW-0220">Diaminopimelate biosynthesis</keyword>
<keyword id="KW-0457">Lysine biosynthesis</keyword>
<keyword id="KW-0520">NAD</keyword>
<keyword id="KW-0521">NADP</keyword>
<keyword id="KW-0560">Oxidoreductase</keyword>
<gene>
    <name evidence="1" type="primary">dapB</name>
    <name type="ordered locus">VCM66_2314</name>
</gene>
<accession>C3LQT6</accession>
<name>DAPB_VIBCM</name>
<comment type="function">
    <text evidence="1">Catalyzes the conversion of 4-hydroxy-tetrahydrodipicolinate (HTPA) to tetrahydrodipicolinate.</text>
</comment>
<comment type="catalytic activity">
    <reaction evidence="1">
        <text>(S)-2,3,4,5-tetrahydrodipicolinate + NAD(+) + H2O = (2S,4S)-4-hydroxy-2,3,4,5-tetrahydrodipicolinate + NADH + H(+)</text>
        <dbReference type="Rhea" id="RHEA:35323"/>
        <dbReference type="ChEBI" id="CHEBI:15377"/>
        <dbReference type="ChEBI" id="CHEBI:15378"/>
        <dbReference type="ChEBI" id="CHEBI:16845"/>
        <dbReference type="ChEBI" id="CHEBI:57540"/>
        <dbReference type="ChEBI" id="CHEBI:57945"/>
        <dbReference type="ChEBI" id="CHEBI:67139"/>
        <dbReference type="EC" id="1.17.1.8"/>
    </reaction>
</comment>
<comment type="catalytic activity">
    <reaction evidence="1">
        <text>(S)-2,3,4,5-tetrahydrodipicolinate + NADP(+) + H2O = (2S,4S)-4-hydroxy-2,3,4,5-tetrahydrodipicolinate + NADPH + H(+)</text>
        <dbReference type="Rhea" id="RHEA:35331"/>
        <dbReference type="ChEBI" id="CHEBI:15377"/>
        <dbReference type="ChEBI" id="CHEBI:15378"/>
        <dbReference type="ChEBI" id="CHEBI:16845"/>
        <dbReference type="ChEBI" id="CHEBI:57783"/>
        <dbReference type="ChEBI" id="CHEBI:58349"/>
        <dbReference type="ChEBI" id="CHEBI:67139"/>
        <dbReference type="EC" id="1.17.1.8"/>
    </reaction>
</comment>
<comment type="pathway">
    <text evidence="1">Amino-acid biosynthesis; L-lysine biosynthesis via DAP pathway; (S)-tetrahydrodipicolinate from L-aspartate: step 4/4.</text>
</comment>
<comment type="subcellular location">
    <subcellularLocation>
        <location evidence="1">Cytoplasm</location>
    </subcellularLocation>
</comment>
<comment type="similarity">
    <text evidence="1">Belongs to the DapB family.</text>
</comment>
<comment type="caution">
    <text evidence="2">Was originally thought to be a dihydrodipicolinate reductase (DHDPR), catalyzing the conversion of dihydrodipicolinate to tetrahydrodipicolinate. However, it was shown in E.coli that the substrate of the enzymatic reaction is not dihydrodipicolinate (DHDP) but in fact (2S,4S)-4-hydroxy-2,3,4,5-tetrahydrodipicolinic acid (HTPA), the product released by the DapA-catalyzed reaction.</text>
</comment>
<feature type="chain" id="PRO_1000189765" description="4-hydroxy-tetrahydrodipicolinate reductase">
    <location>
        <begin position="1"/>
        <end position="269"/>
    </location>
</feature>
<feature type="active site" description="Proton donor/acceptor" evidence="1">
    <location>
        <position position="155"/>
    </location>
</feature>
<feature type="active site" description="Proton donor" evidence="1">
    <location>
        <position position="159"/>
    </location>
</feature>
<feature type="binding site" evidence="1">
    <location>
        <begin position="8"/>
        <end position="13"/>
    </location>
    <ligand>
        <name>NAD(+)</name>
        <dbReference type="ChEBI" id="CHEBI:57540"/>
    </ligand>
</feature>
<feature type="binding site" evidence="1">
    <location>
        <position position="34"/>
    </location>
    <ligand>
        <name>NAD(+)</name>
        <dbReference type="ChEBI" id="CHEBI:57540"/>
    </ligand>
</feature>
<feature type="binding site" evidence="1">
    <location>
        <position position="35"/>
    </location>
    <ligand>
        <name>NADP(+)</name>
        <dbReference type="ChEBI" id="CHEBI:58349"/>
    </ligand>
</feature>
<feature type="binding site" evidence="1">
    <location>
        <begin position="98"/>
        <end position="100"/>
    </location>
    <ligand>
        <name>NAD(+)</name>
        <dbReference type="ChEBI" id="CHEBI:57540"/>
    </ligand>
</feature>
<feature type="binding site" evidence="1">
    <location>
        <begin position="122"/>
        <end position="125"/>
    </location>
    <ligand>
        <name>NAD(+)</name>
        <dbReference type="ChEBI" id="CHEBI:57540"/>
    </ligand>
</feature>
<feature type="binding site" evidence="1">
    <location>
        <position position="156"/>
    </location>
    <ligand>
        <name>(S)-2,3,4,5-tetrahydrodipicolinate</name>
        <dbReference type="ChEBI" id="CHEBI:16845"/>
    </ligand>
</feature>
<feature type="binding site" evidence="1">
    <location>
        <begin position="165"/>
        <end position="166"/>
    </location>
    <ligand>
        <name>(S)-2,3,4,5-tetrahydrodipicolinate</name>
        <dbReference type="ChEBI" id="CHEBI:16845"/>
    </ligand>
</feature>
<reference key="1">
    <citation type="journal article" date="2008" name="PLoS ONE">
        <title>A recalibrated molecular clock and independent origins for the cholera pandemic clones.</title>
        <authorList>
            <person name="Feng L."/>
            <person name="Reeves P.R."/>
            <person name="Lan R."/>
            <person name="Ren Y."/>
            <person name="Gao C."/>
            <person name="Zhou Z."/>
            <person name="Ren Y."/>
            <person name="Cheng J."/>
            <person name="Wang W."/>
            <person name="Wang J."/>
            <person name="Qian W."/>
            <person name="Li D."/>
            <person name="Wang L."/>
        </authorList>
    </citation>
    <scope>NUCLEOTIDE SEQUENCE [LARGE SCALE GENOMIC DNA]</scope>
    <source>
        <strain>M66-2</strain>
    </source>
</reference>
<dbReference type="EC" id="1.17.1.8" evidence="1"/>
<dbReference type="EMBL" id="CP001233">
    <property type="protein sequence ID" value="ACP06614.1"/>
    <property type="molecule type" value="Genomic_DNA"/>
</dbReference>
<dbReference type="RefSeq" id="WP_000251590.1">
    <property type="nucleotide sequence ID" value="NC_012578.1"/>
</dbReference>
<dbReference type="SMR" id="C3LQT6"/>
<dbReference type="GeneID" id="88783203"/>
<dbReference type="KEGG" id="vcm:VCM66_2314"/>
<dbReference type="HOGENOM" id="CLU_047479_2_1_6"/>
<dbReference type="UniPathway" id="UPA00034">
    <property type="reaction ID" value="UER00018"/>
</dbReference>
<dbReference type="Proteomes" id="UP000001217">
    <property type="component" value="Chromosome I"/>
</dbReference>
<dbReference type="GO" id="GO:0005829">
    <property type="term" value="C:cytosol"/>
    <property type="evidence" value="ECO:0007669"/>
    <property type="project" value="TreeGrafter"/>
</dbReference>
<dbReference type="GO" id="GO:0008839">
    <property type="term" value="F:4-hydroxy-tetrahydrodipicolinate reductase"/>
    <property type="evidence" value="ECO:0007669"/>
    <property type="project" value="UniProtKB-EC"/>
</dbReference>
<dbReference type="GO" id="GO:0051287">
    <property type="term" value="F:NAD binding"/>
    <property type="evidence" value="ECO:0007669"/>
    <property type="project" value="UniProtKB-UniRule"/>
</dbReference>
<dbReference type="GO" id="GO:0050661">
    <property type="term" value="F:NADP binding"/>
    <property type="evidence" value="ECO:0007669"/>
    <property type="project" value="UniProtKB-UniRule"/>
</dbReference>
<dbReference type="GO" id="GO:0016726">
    <property type="term" value="F:oxidoreductase activity, acting on CH or CH2 groups, NAD or NADP as acceptor"/>
    <property type="evidence" value="ECO:0007669"/>
    <property type="project" value="UniProtKB-UniRule"/>
</dbReference>
<dbReference type="GO" id="GO:0019877">
    <property type="term" value="P:diaminopimelate biosynthetic process"/>
    <property type="evidence" value="ECO:0007669"/>
    <property type="project" value="UniProtKB-UniRule"/>
</dbReference>
<dbReference type="GO" id="GO:0009089">
    <property type="term" value="P:lysine biosynthetic process via diaminopimelate"/>
    <property type="evidence" value="ECO:0007669"/>
    <property type="project" value="UniProtKB-UniRule"/>
</dbReference>
<dbReference type="CDD" id="cd02274">
    <property type="entry name" value="DHDPR_N"/>
    <property type="match status" value="1"/>
</dbReference>
<dbReference type="FunFam" id="3.30.360.10:FF:000004">
    <property type="entry name" value="4-hydroxy-tetrahydrodipicolinate reductase"/>
    <property type="match status" value="1"/>
</dbReference>
<dbReference type="FunFam" id="3.40.50.720:FF:000048">
    <property type="entry name" value="4-hydroxy-tetrahydrodipicolinate reductase"/>
    <property type="match status" value="1"/>
</dbReference>
<dbReference type="Gene3D" id="3.30.360.10">
    <property type="entry name" value="Dihydrodipicolinate Reductase, domain 2"/>
    <property type="match status" value="1"/>
</dbReference>
<dbReference type="Gene3D" id="3.40.50.720">
    <property type="entry name" value="NAD(P)-binding Rossmann-like Domain"/>
    <property type="match status" value="1"/>
</dbReference>
<dbReference type="HAMAP" id="MF_00102">
    <property type="entry name" value="DapB"/>
    <property type="match status" value="1"/>
</dbReference>
<dbReference type="InterPro" id="IPR022663">
    <property type="entry name" value="DapB_C"/>
</dbReference>
<dbReference type="InterPro" id="IPR000846">
    <property type="entry name" value="DapB_N"/>
</dbReference>
<dbReference type="InterPro" id="IPR022664">
    <property type="entry name" value="DapB_N_CS"/>
</dbReference>
<dbReference type="InterPro" id="IPR023940">
    <property type="entry name" value="DHDPR_bac"/>
</dbReference>
<dbReference type="InterPro" id="IPR036291">
    <property type="entry name" value="NAD(P)-bd_dom_sf"/>
</dbReference>
<dbReference type="NCBIfam" id="TIGR00036">
    <property type="entry name" value="dapB"/>
    <property type="match status" value="1"/>
</dbReference>
<dbReference type="PANTHER" id="PTHR20836:SF0">
    <property type="entry name" value="4-HYDROXY-TETRAHYDRODIPICOLINATE REDUCTASE 1, CHLOROPLASTIC-RELATED"/>
    <property type="match status" value="1"/>
</dbReference>
<dbReference type="PANTHER" id="PTHR20836">
    <property type="entry name" value="DIHYDRODIPICOLINATE REDUCTASE"/>
    <property type="match status" value="1"/>
</dbReference>
<dbReference type="Pfam" id="PF05173">
    <property type="entry name" value="DapB_C"/>
    <property type="match status" value="1"/>
</dbReference>
<dbReference type="Pfam" id="PF01113">
    <property type="entry name" value="DapB_N"/>
    <property type="match status" value="1"/>
</dbReference>
<dbReference type="PIRSF" id="PIRSF000161">
    <property type="entry name" value="DHPR"/>
    <property type="match status" value="1"/>
</dbReference>
<dbReference type="SUPFAM" id="SSF55347">
    <property type="entry name" value="Glyceraldehyde-3-phosphate dehydrogenase-like, C-terminal domain"/>
    <property type="match status" value="1"/>
</dbReference>
<dbReference type="SUPFAM" id="SSF51735">
    <property type="entry name" value="NAD(P)-binding Rossmann-fold domains"/>
    <property type="match status" value="1"/>
</dbReference>
<dbReference type="PROSITE" id="PS01298">
    <property type="entry name" value="DAPB"/>
    <property type="match status" value="1"/>
</dbReference>
<protein>
    <recommendedName>
        <fullName evidence="1">4-hydroxy-tetrahydrodipicolinate reductase</fullName>
        <shortName evidence="1">HTPA reductase</shortName>
        <ecNumber evidence="1">1.17.1.8</ecNumber>
    </recommendedName>
</protein>
<sequence length="269" mass="28607">MVRIAIAGAAGRMGRNLVKATHQNPLSELGAGSERPESSLVGVDIGELCGIGKQGIVLVDNLEQAVEQFDVIIDFTAPASTLANLALCEQHGKKLVIGTTGFTDAQRQTIEQAAKKIPIVMAPNYSVGVNLVFKLLEKAAKVMGDYCDIEIIEAHHRHKVDAPSGTAIGMGEAIAHAMGNQLSDVAVYAREGITGERSRNEIGFATIRAGDIIGEHTAMFADIGERVEITHKATDRMTFANGAVKAAIWLAEQPAGFYTMTDVLGLNDL</sequence>
<proteinExistence type="inferred from homology"/>